<feature type="chain" id="PRO_0000275045" description="NADH-ubiquinone oxidoreductase chain 4L">
    <location>
        <begin position="1"/>
        <end position="98"/>
    </location>
</feature>
<feature type="transmembrane region" description="Helical" evidence="3">
    <location>
        <begin position="1"/>
        <end position="21"/>
    </location>
</feature>
<feature type="transmembrane region" description="Helical" evidence="3">
    <location>
        <begin position="30"/>
        <end position="50"/>
    </location>
</feature>
<feature type="transmembrane region" description="Helical" evidence="3">
    <location>
        <begin position="61"/>
        <end position="81"/>
    </location>
</feature>
<accession>Q3L6S8</accession>
<geneLocation type="mitochondrion"/>
<gene>
    <name type="primary">MT-ND4L</name>
    <name type="synonym">MTND4L</name>
    <name type="synonym">NADH4L</name>
    <name type="synonym">ND4L</name>
</gene>
<sequence>MSVVYINIFLAFILSFMGLLVYRSHLMSSLLCLEGMMLSLFVMMTITVLTNHFTLASMTPIILLVFAACEAALGLSLLVMISNTYGTDYVQNLNLLQC</sequence>
<proteinExistence type="inferred from homology"/>
<comment type="function">
    <text evidence="1">Core subunit of the mitochondrial membrane respiratory chain NADH dehydrogenase (Complex I) which catalyzes electron transfer from NADH through the respiratory chain, using ubiquinone as an electron acceptor. Part of the enzyme membrane arm which is embedded in the lipid bilayer and involved in proton translocation.</text>
</comment>
<comment type="catalytic activity">
    <reaction evidence="1">
        <text>a ubiquinone + NADH + 5 H(+)(in) = a ubiquinol + NAD(+) + 4 H(+)(out)</text>
        <dbReference type="Rhea" id="RHEA:29091"/>
        <dbReference type="Rhea" id="RHEA-COMP:9565"/>
        <dbReference type="Rhea" id="RHEA-COMP:9566"/>
        <dbReference type="ChEBI" id="CHEBI:15378"/>
        <dbReference type="ChEBI" id="CHEBI:16389"/>
        <dbReference type="ChEBI" id="CHEBI:17976"/>
        <dbReference type="ChEBI" id="CHEBI:57540"/>
        <dbReference type="ChEBI" id="CHEBI:57945"/>
        <dbReference type="EC" id="7.1.1.2"/>
    </reaction>
    <physiologicalReaction direction="left-to-right" evidence="1">
        <dbReference type="Rhea" id="RHEA:29092"/>
    </physiologicalReaction>
</comment>
<comment type="subunit">
    <text evidence="2">Core subunit of respiratory chain NADH dehydrogenase (Complex I) which is composed of 45 different subunits.</text>
</comment>
<comment type="subcellular location">
    <subcellularLocation>
        <location evidence="2">Mitochondrion inner membrane</location>
        <topology evidence="3">Multi-pass membrane protein</topology>
    </subcellularLocation>
</comment>
<comment type="similarity">
    <text evidence="4">Belongs to the complex I subunit 4L family.</text>
</comment>
<reference key="1">
    <citation type="journal article" date="2005" name="Mol. Phylogenet. Evol.">
        <title>A phylogeny of the Caniformia (order Carnivora) based on 12 complete protein-coding mitochondrial genes.</title>
        <authorList>
            <person name="Delisle I."/>
            <person name="Strobeck C."/>
        </authorList>
    </citation>
    <scope>NUCLEOTIDE SEQUENCE [GENOMIC DNA]</scope>
</reference>
<name>NU4LM_LONCN</name>
<dbReference type="EC" id="7.1.1.2"/>
<dbReference type="EMBL" id="AY598560">
    <property type="protein sequence ID" value="AAU00506.1"/>
    <property type="molecule type" value="Genomic_DNA"/>
</dbReference>
<dbReference type="SMR" id="Q3L6S8"/>
<dbReference type="GO" id="GO:0005743">
    <property type="term" value="C:mitochondrial inner membrane"/>
    <property type="evidence" value="ECO:0000250"/>
    <property type="project" value="UniProtKB"/>
</dbReference>
<dbReference type="GO" id="GO:0045271">
    <property type="term" value="C:respiratory chain complex I"/>
    <property type="evidence" value="ECO:0000250"/>
    <property type="project" value="UniProtKB"/>
</dbReference>
<dbReference type="GO" id="GO:0008137">
    <property type="term" value="F:NADH dehydrogenase (ubiquinone) activity"/>
    <property type="evidence" value="ECO:0000250"/>
    <property type="project" value="UniProtKB"/>
</dbReference>
<dbReference type="GO" id="GO:0042773">
    <property type="term" value="P:ATP synthesis coupled electron transport"/>
    <property type="evidence" value="ECO:0007669"/>
    <property type="project" value="InterPro"/>
</dbReference>
<dbReference type="FunFam" id="1.10.287.3510:FF:000002">
    <property type="entry name" value="NADH-ubiquinone oxidoreductase chain 4L"/>
    <property type="match status" value="1"/>
</dbReference>
<dbReference type="Gene3D" id="1.10.287.3510">
    <property type="match status" value="1"/>
</dbReference>
<dbReference type="InterPro" id="IPR001133">
    <property type="entry name" value="NADH_UbQ_OxRdtase_chain4L/K"/>
</dbReference>
<dbReference type="InterPro" id="IPR039428">
    <property type="entry name" value="NUOK/Mnh_C1-like"/>
</dbReference>
<dbReference type="PANTHER" id="PTHR11434:SF0">
    <property type="entry name" value="NADH-UBIQUINONE OXIDOREDUCTASE CHAIN 4L"/>
    <property type="match status" value="1"/>
</dbReference>
<dbReference type="PANTHER" id="PTHR11434">
    <property type="entry name" value="NADH-UBIQUINONE OXIDOREDUCTASE SUBUNIT ND4L"/>
    <property type="match status" value="1"/>
</dbReference>
<dbReference type="Pfam" id="PF00420">
    <property type="entry name" value="Oxidored_q2"/>
    <property type="match status" value="1"/>
</dbReference>
<keyword id="KW-0249">Electron transport</keyword>
<keyword id="KW-0472">Membrane</keyword>
<keyword id="KW-0496">Mitochondrion</keyword>
<keyword id="KW-0999">Mitochondrion inner membrane</keyword>
<keyword id="KW-0520">NAD</keyword>
<keyword id="KW-0679">Respiratory chain</keyword>
<keyword id="KW-1278">Translocase</keyword>
<keyword id="KW-0812">Transmembrane</keyword>
<keyword id="KW-1133">Transmembrane helix</keyword>
<keyword id="KW-0813">Transport</keyword>
<keyword id="KW-0830">Ubiquinone</keyword>
<organism>
    <name type="scientific">Lontra canadensis</name>
    <name type="common">North American river otter</name>
    <name type="synonym">Lutra canadensis</name>
    <dbReference type="NCBI Taxonomy" id="76717"/>
    <lineage>
        <taxon>Eukaryota</taxon>
        <taxon>Metazoa</taxon>
        <taxon>Chordata</taxon>
        <taxon>Craniata</taxon>
        <taxon>Vertebrata</taxon>
        <taxon>Euteleostomi</taxon>
        <taxon>Mammalia</taxon>
        <taxon>Eutheria</taxon>
        <taxon>Laurasiatheria</taxon>
        <taxon>Carnivora</taxon>
        <taxon>Caniformia</taxon>
        <taxon>Musteloidea</taxon>
        <taxon>Mustelidae</taxon>
        <taxon>Lutrinae</taxon>
        <taxon>Lontra</taxon>
    </lineage>
</organism>
<protein>
    <recommendedName>
        <fullName>NADH-ubiquinone oxidoreductase chain 4L</fullName>
        <ecNumber>7.1.1.2</ecNumber>
    </recommendedName>
    <alternativeName>
        <fullName>NADH dehydrogenase subunit 4L</fullName>
    </alternativeName>
</protein>
<evidence type="ECO:0000250" key="1">
    <source>
        <dbReference type="UniProtKB" id="P03901"/>
    </source>
</evidence>
<evidence type="ECO:0000250" key="2">
    <source>
        <dbReference type="UniProtKB" id="P03902"/>
    </source>
</evidence>
<evidence type="ECO:0000255" key="3"/>
<evidence type="ECO:0000305" key="4"/>